<comment type="function">
    <text evidence="2">Binds specifically to voltage-gated sodium channels (Nav), thereby delaying their inactivation during signal transduction. Causes death to crabs.</text>
</comment>
<comment type="subcellular location">
    <subcellularLocation>
        <location evidence="6">Secreted</location>
    </subcellularLocation>
    <subcellularLocation>
        <location evidence="6">Nematocyst</location>
    </subcellularLocation>
</comment>
<comment type="similarity">
    <text evidence="6">Belongs to the sea anemone sodium channel inhibitory toxin family. Type I subfamily.</text>
</comment>
<reference key="1">
    <citation type="journal article" date="2008" name="Mol. Biol. Evol.">
        <title>Concerted evolution of sea anemone neurotoxin genes is revealed through analysis of the Nematostella vectensis genome.</title>
        <authorList>
            <person name="Moran Y."/>
            <person name="Weinberger H."/>
            <person name="Sullivan J.C."/>
            <person name="Reitzel A.M."/>
            <person name="Finnerty J.R."/>
            <person name="Gurevitz M."/>
        </authorList>
    </citation>
    <scope>NUCLEOTIDE SEQUENCE [MRNA]</scope>
</reference>
<reference key="2">
    <citation type="journal article" date="2012" name="Toxicon">
        <title>Development of a rational nomenclature for naming peptide and protein toxins from sea anemones.</title>
        <authorList>
            <person name="Oliveira J.S."/>
            <person name="Fuentes-Silva D."/>
            <person name="King G.F."/>
        </authorList>
    </citation>
    <scope>NOMENCLATURE</scope>
</reference>
<accession>B1NWU5</accession>
<sequence length="82" mass="8808">MNRLMILVFAAVFLALASADEDVDIAKRGIPCLCVSDGPSTRGNNLSGIMWMKTGGYGGNGCPKGWHFCGKSRGFFSDCCKR</sequence>
<evidence type="ECO:0000250" key="1">
    <source>
        <dbReference type="UniProtKB" id="P01530"/>
    </source>
</evidence>
<evidence type="ECO:0000250" key="2">
    <source>
        <dbReference type="UniProtKB" id="Q9NJQ2"/>
    </source>
</evidence>
<evidence type="ECO:0000255" key="3"/>
<evidence type="ECO:0000303" key="4">
    <source>
    </source>
</evidence>
<evidence type="ECO:0000303" key="5">
    <source>
    </source>
</evidence>
<evidence type="ECO:0000305" key="6"/>
<evidence type="ECO:0000312" key="7">
    <source>
        <dbReference type="EMBL" id="ABW97361.1"/>
    </source>
</evidence>
<keyword id="KW-0165">Cleavage on pair of basic residues</keyword>
<keyword id="KW-1015">Disulfide bond</keyword>
<keyword id="KW-0872">Ion channel impairing toxin</keyword>
<keyword id="KW-0166">Nematocyst</keyword>
<keyword id="KW-0528">Neurotoxin</keyword>
<keyword id="KW-0964">Secreted</keyword>
<keyword id="KW-0732">Signal</keyword>
<keyword id="KW-0800">Toxin</keyword>
<keyword id="KW-0738">Voltage-gated sodium channel impairing toxin</keyword>
<proteinExistence type="inferred from homology"/>
<name>NA131_ACTEQ</name>
<organism>
    <name type="scientific">Actinia equina</name>
    <name type="common">Beadlet anemone</name>
    <dbReference type="NCBI Taxonomy" id="6106"/>
    <lineage>
        <taxon>Eukaryota</taxon>
        <taxon>Metazoa</taxon>
        <taxon>Cnidaria</taxon>
        <taxon>Anthozoa</taxon>
        <taxon>Hexacorallia</taxon>
        <taxon>Actiniaria</taxon>
        <taxon>Actiniidae</taxon>
        <taxon>Actinia</taxon>
    </lineage>
</organism>
<protein>
    <recommendedName>
        <fullName evidence="5">Delta-actitoxin-Aeq2c</fullName>
        <shortName evidence="5">Delta-AITX-Aeq2c</shortName>
    </recommendedName>
    <alternativeName>
        <fullName evidence="4">Ae3-1</fullName>
    </alternativeName>
    <alternativeName>
        <fullName evidence="7">Neurotoxin 3-1</fullName>
    </alternativeName>
</protein>
<feature type="signal peptide" evidence="3">
    <location>
        <begin position="1"/>
        <end position="19"/>
    </location>
</feature>
<feature type="propeptide" id="PRO_0000433578" evidence="2">
    <location>
        <begin position="20"/>
        <end position="26"/>
    </location>
</feature>
<feature type="chain" id="PRO_5000319689" description="Delta-actitoxin-Aeq2c">
    <location>
        <begin position="29"/>
        <end position="82"/>
    </location>
</feature>
<feature type="disulfide bond" evidence="1">
    <location>
        <begin position="32"/>
        <end position="79"/>
    </location>
</feature>
<feature type="disulfide bond" evidence="1">
    <location>
        <begin position="34"/>
        <end position="69"/>
    </location>
</feature>
<feature type="disulfide bond" evidence="1">
    <location>
        <begin position="62"/>
        <end position="80"/>
    </location>
</feature>
<dbReference type="EMBL" id="EU124482">
    <property type="protein sequence ID" value="ABW97361.1"/>
    <property type="molecule type" value="mRNA"/>
</dbReference>
<dbReference type="SMR" id="B1NWU5"/>
<dbReference type="GO" id="GO:0005576">
    <property type="term" value="C:extracellular region"/>
    <property type="evidence" value="ECO:0007669"/>
    <property type="project" value="UniProtKB-SubCell"/>
</dbReference>
<dbReference type="GO" id="GO:0042151">
    <property type="term" value="C:nematocyst"/>
    <property type="evidence" value="ECO:0007669"/>
    <property type="project" value="UniProtKB-SubCell"/>
</dbReference>
<dbReference type="GO" id="GO:0017080">
    <property type="term" value="F:sodium channel regulator activity"/>
    <property type="evidence" value="ECO:0007669"/>
    <property type="project" value="UniProtKB-KW"/>
</dbReference>
<dbReference type="GO" id="GO:0090729">
    <property type="term" value="F:toxin activity"/>
    <property type="evidence" value="ECO:0007669"/>
    <property type="project" value="UniProtKB-KW"/>
</dbReference>
<dbReference type="Gene3D" id="2.20.20.10">
    <property type="entry name" value="Anthopleurin-A"/>
    <property type="match status" value="1"/>
</dbReference>
<dbReference type="InterPro" id="IPR023355">
    <property type="entry name" value="Myo_ane_neurotoxin_sf"/>
</dbReference>
<dbReference type="Pfam" id="PF00706">
    <property type="entry name" value="Toxin_4"/>
    <property type="match status" value="1"/>
</dbReference>
<dbReference type="SUPFAM" id="SSF57392">
    <property type="entry name" value="Defensin-like"/>
    <property type="match status" value="1"/>
</dbReference>